<organism>
    <name type="scientific">Chilobrachys guangxiensis</name>
    <name type="common">Chinese earth tiger tarantula</name>
    <name type="synonym">Chilobrachys jingzhao</name>
    <dbReference type="NCBI Taxonomy" id="278060"/>
    <lineage>
        <taxon>Eukaryota</taxon>
        <taxon>Metazoa</taxon>
        <taxon>Ecdysozoa</taxon>
        <taxon>Arthropoda</taxon>
        <taxon>Chelicerata</taxon>
        <taxon>Arachnida</taxon>
        <taxon>Araneae</taxon>
        <taxon>Mygalomorphae</taxon>
        <taxon>Theraphosidae</taxon>
        <taxon>Chilobrachys</taxon>
    </lineage>
</organism>
<keyword id="KW-0903">Direct protein sequencing</keyword>
<keyword id="KW-1015">Disulfide bond</keyword>
<keyword id="KW-0872">Ion channel impairing toxin</keyword>
<keyword id="KW-0960">Knottin</keyword>
<keyword id="KW-0528">Neurotoxin</keyword>
<keyword id="KW-0629">Postsynaptic neurotoxin</keyword>
<keyword id="KW-0632">Potassium channel impairing toxin</keyword>
<keyword id="KW-0638">Presynaptic neurotoxin</keyword>
<keyword id="KW-0964">Secreted</keyword>
<keyword id="KW-0732">Signal</keyword>
<keyword id="KW-0800">Toxin</keyword>
<keyword id="KW-1220">Voltage-gated potassium channel impairing toxin</keyword>
<keyword id="KW-0738">Voltage-gated sodium channel impairing toxin</keyword>
<dbReference type="EMBL" id="EU233849">
    <property type="protein sequence ID" value="ABY71668.1"/>
    <property type="molecule type" value="mRNA"/>
</dbReference>
<dbReference type="SMR" id="B1P1B8"/>
<dbReference type="ArachnoServer" id="AS000045">
    <property type="toxin name" value="delta-theraphotoxin-Cg1a"/>
</dbReference>
<dbReference type="GO" id="GO:0005576">
    <property type="term" value="C:extracellular region"/>
    <property type="evidence" value="ECO:0007669"/>
    <property type="project" value="UniProtKB-SubCell"/>
</dbReference>
<dbReference type="GO" id="GO:0035792">
    <property type="term" value="C:host cell postsynaptic membrane"/>
    <property type="evidence" value="ECO:0007669"/>
    <property type="project" value="UniProtKB-KW"/>
</dbReference>
<dbReference type="GO" id="GO:0044231">
    <property type="term" value="C:host cell presynaptic membrane"/>
    <property type="evidence" value="ECO:0007669"/>
    <property type="project" value="UniProtKB-KW"/>
</dbReference>
<dbReference type="GO" id="GO:0008200">
    <property type="term" value="F:ion channel inhibitor activity"/>
    <property type="evidence" value="ECO:0007669"/>
    <property type="project" value="InterPro"/>
</dbReference>
<dbReference type="GO" id="GO:0015459">
    <property type="term" value="F:potassium channel regulator activity"/>
    <property type="evidence" value="ECO:0007669"/>
    <property type="project" value="UniProtKB-KW"/>
</dbReference>
<dbReference type="GO" id="GO:0017080">
    <property type="term" value="F:sodium channel regulator activity"/>
    <property type="evidence" value="ECO:0007669"/>
    <property type="project" value="UniProtKB-KW"/>
</dbReference>
<dbReference type="GO" id="GO:0090729">
    <property type="term" value="F:toxin activity"/>
    <property type="evidence" value="ECO:0007669"/>
    <property type="project" value="UniProtKB-KW"/>
</dbReference>
<dbReference type="InterPro" id="IPR011696">
    <property type="entry name" value="Huwentoxin-1"/>
</dbReference>
<dbReference type="Pfam" id="PF07740">
    <property type="entry name" value="Toxin_12"/>
    <property type="match status" value="1"/>
</dbReference>
<feature type="signal peptide" evidence="1">
    <location>
        <begin position="1"/>
        <end position="21"/>
    </location>
</feature>
<feature type="propeptide" id="PRO_0000398390" evidence="4">
    <location>
        <begin position="22"/>
        <end position="29"/>
    </location>
</feature>
<feature type="peptide" id="PRO_0000398391" description="Delta-theraphotoxin-Cg1a 3" evidence="4">
    <location>
        <begin position="30"/>
        <end position="62"/>
    </location>
</feature>
<feature type="disulfide bond" evidence="2">
    <location>
        <begin position="31"/>
        <end position="46"/>
    </location>
</feature>
<feature type="disulfide bond" evidence="2">
    <location>
        <begin position="38"/>
        <end position="51"/>
    </location>
</feature>
<feature type="disulfide bond" evidence="2">
    <location>
        <begin position="45"/>
        <end position="58"/>
    </location>
</feature>
<comment type="function">
    <text evidence="3 5 6 7">Moderately inhibits voltage-gated sodium channels and weakly inhibits voltage-gated potassium channel (PubMed:17150181, PubMed:17618665, PubMed:23246579, PubMed:26721415). Inhibits the inactivation of rat Nav1.2/SCN2A (IC(50)=870 nM), rat Nav1.3/SCN3A (IC(50)=845 nM), rat Nav1.4/SCN4A (IC(50)=339 nM), human Nav1.5/SCN5A (IC(50)=335 nM) and human Nav1.7/SCN9A sodium channels (IC(50)=348 nM) (PubMed:26721415). The toxin delays the inactivation of sodium channels without affecting the activation and steady-state inactivation kinetics in the physiological range of voltages (PubMed:26721415). Site-directed mutagenesis of the sodium channel indicates that the toxin interacts with site 3 located at the extracellular S3-S4 linker of domain IV (PubMed:26721415). On potassium channels, it inhibits activation of channels with an IC(50) of 8.05 uM through a voltage sensor-trapping mechanism (PubMed:23246579). It increases muscle contraction in several assays (mouse phrenic nerve-diaphragm, toad heart, rat vas deferens) and is suggested to act both presynaptically and postsynaptically (PubMed:17618665).</text>
</comment>
<comment type="subcellular location">
    <subcellularLocation>
        <location evidence="4">Secreted</location>
    </subcellularLocation>
</comment>
<comment type="tissue specificity">
    <text evidence="10">Expressed by the venom gland.</text>
</comment>
<comment type="domain">
    <text evidence="2">The presence of a 'disulfide through disulfide knot' structurally defines this protein as a knottin.</text>
</comment>
<comment type="similarity">
    <text evidence="9">Belongs to the neurotoxin 10 (Hwtx-1) family. 33 (Jztx-1) subfamily.</text>
</comment>
<protein>
    <recommendedName>
        <fullName evidence="9">Delta-theraphotoxin-Cg1a 3</fullName>
        <shortName evidence="9">Delta-TRTX-Cg1a</shortName>
    </recommendedName>
    <alternativeName>
        <fullName evidence="9">Jingzhaotoxin-1.3</fullName>
        <shortName evidence="9">JZTX-1.3</shortName>
    </alternativeName>
    <alternativeName>
        <fullName evidence="9">Jingzhaotoxin-I.3</fullName>
        <shortName evidence="11">JZTX-I.3</shortName>
    </alternativeName>
    <alternativeName>
        <fullName evidence="8">Peptide F5-24.92</fullName>
    </alternativeName>
</protein>
<accession>B1P1B8</accession>
<evidence type="ECO:0000255" key="1"/>
<evidence type="ECO:0000269" key="2">
    <source>
    </source>
</evidence>
<evidence type="ECO:0000269" key="3">
    <source>
    </source>
</evidence>
<evidence type="ECO:0000269" key="4">
    <source>
    </source>
</evidence>
<evidence type="ECO:0000269" key="5">
    <source>
    </source>
</evidence>
<evidence type="ECO:0000269" key="6">
    <source>
    </source>
</evidence>
<evidence type="ECO:0000269" key="7">
    <source>
    </source>
</evidence>
<evidence type="ECO:0000303" key="8">
    <source>
    </source>
</evidence>
<evidence type="ECO:0000305" key="9"/>
<evidence type="ECO:0000305" key="10">
    <source>
    </source>
</evidence>
<evidence type="ECO:0000312" key="11">
    <source>
        <dbReference type="EMBL" id="ABY71668.1"/>
    </source>
</evidence>
<reference key="1">
    <citation type="journal article" date="2008" name="Cell. Mol. Life Sci.">
        <title>Molecular diversity and evolution of cystine knot toxins of the tarantula Chilobrachys jingzhao.</title>
        <authorList>
            <person name="Chen J."/>
            <person name="Deng M."/>
            <person name="He Q."/>
            <person name="Meng E."/>
            <person name="Jiang L."/>
            <person name="Liao Z."/>
            <person name="Rong M."/>
            <person name="Liang S."/>
        </authorList>
    </citation>
    <scope>NUCLEOTIDE SEQUENCE [LARGE SCALE MRNA]</scope>
    <source>
        <tissue>Venom gland</tissue>
    </source>
</reference>
<reference key="2">
    <citation type="journal article" date="2007" name="Proteomics">
        <title>Proteomic and peptidomic analysis of the venom from Chinese tarantula Chilobrachys jingzhao.</title>
        <authorList>
            <person name="Liao Z."/>
            <person name="Cao J."/>
            <person name="Li S."/>
            <person name="Yan X."/>
            <person name="Hu W."/>
            <person name="He Q."/>
            <person name="Chen J."/>
            <person name="Tang J."/>
            <person name="Xie J."/>
            <person name="Liang S."/>
        </authorList>
    </citation>
    <scope>PROTEIN SEQUENCE OF 30-62</scope>
    <scope>IDENTIFICATION BY MASS SPECTROMETRY</scope>
    <scope>SUBCELLULAR LOCATION</scope>
    <source>
        <tissue>Venom</tissue>
    </source>
</reference>
<reference key="3">
    <citation type="journal article" date="2007" name="Biochem. Biophys. Res. Commun.">
        <title>Effects and mechanism of Chinese tarantula toxins on the Kv2.1 potassium channels.</title>
        <authorList>
            <person name="Yuan C."/>
            <person name="Yang S."/>
            <person name="Liao Z."/>
            <person name="Liang S."/>
        </authorList>
    </citation>
    <scope>FUNCTION</scope>
    <scope>BIOASSAY</scope>
    <source>
        <tissue>Venom</tissue>
    </source>
</reference>
<reference key="4">
    <citation type="journal article" date="2007" name="Toxicon">
        <title>Characterization of the excitatory mechanism induced by Jingzhaotoxin-I inhibiting sodium channel inactivation.</title>
        <authorList>
            <person name="Xiao Y.-C."/>
            <person name="Li J."/>
            <person name="Deng M."/>
            <person name="Dai C.-L."/>
            <person name="Liang S.-P."/>
        </authorList>
    </citation>
    <scope>FUNCTION</scope>
    <source>
        <tissue>Venom</tissue>
    </source>
</reference>
<reference key="5">
    <citation type="journal article" date="2013" name="Toxicon">
        <title>Molecular determinants for the tarantula toxin jingzhaotoxin-I interacting with potassium channel Kv2.1.</title>
        <authorList>
            <person name="Tao H."/>
            <person name="Wu Y."/>
            <person name="Deng M."/>
            <person name="He J."/>
            <person name="Wang M."/>
            <person name="Xiao Y."/>
            <person name="Liang S."/>
        </authorList>
    </citation>
    <scope>FUNCTION</scope>
    <source>
        <tissue>Venom</tissue>
    </source>
</reference>
<reference key="6">
    <citation type="journal article" date="2016" name="Toxicon">
        <title>Molecular determinant for the tarantula toxin Jingzhaotoxin-I slowing the fast inactivation of voltage-gated sodium channels.</title>
        <authorList>
            <person name="Tao H."/>
            <person name="Chen X."/>
            <person name="Lu M."/>
            <person name="Wu Y."/>
            <person name="Deng M."/>
            <person name="Zeng X."/>
            <person name="Liu Z."/>
            <person name="Liang S."/>
        </authorList>
    </citation>
    <scope>FUNCTION</scope>
</reference>
<reference key="7">
    <citation type="journal article" date="2005" name="Acta Biochim. Biophys. Sin.">
        <title>Sequence-specific assignment of 1H-NMR resonance and determination of the secondary structure of Jingzhaotoxin-I.</title>
        <authorList>
            <person name="Zeng X.-Z."/>
            <person name="Zhu Q."/>
            <person name="Liang S.-P."/>
        </authorList>
    </citation>
    <scope>STRUCTURE BY NMR OF 30-62</scope>
    <scope>DISULFIDE BONDS</scope>
    <source>
        <tissue>Venom</tissue>
    </source>
</reference>
<name>JZT1C_CHIGU</name>
<proteinExistence type="evidence at protein level"/>
<sequence>MKTSILFVIFSLALVFALSPATEIEETDRACGQFWWKCGEGKPPCCANFACKIGLYLCIWSP</sequence>